<dbReference type="EC" id="6.3.5.5" evidence="1"/>
<dbReference type="EMBL" id="AE001439">
    <property type="protein sequence ID" value="AAD06735.1"/>
    <property type="molecule type" value="Genomic_DNA"/>
</dbReference>
<dbReference type="PIR" id="B71842">
    <property type="entry name" value="B71842"/>
</dbReference>
<dbReference type="RefSeq" id="WP_000254207.1">
    <property type="nucleotide sequence ID" value="NC_000921.1"/>
</dbReference>
<dbReference type="SMR" id="Q9ZJY9"/>
<dbReference type="KEGG" id="hpj:jhp_1158"/>
<dbReference type="PATRIC" id="fig|85963.30.peg.1417"/>
<dbReference type="eggNOG" id="COG0505">
    <property type="taxonomic scope" value="Bacteria"/>
</dbReference>
<dbReference type="UniPathway" id="UPA00068">
    <property type="reaction ID" value="UER00171"/>
</dbReference>
<dbReference type="UniPathway" id="UPA00070">
    <property type="reaction ID" value="UER00115"/>
</dbReference>
<dbReference type="Proteomes" id="UP000000804">
    <property type="component" value="Chromosome"/>
</dbReference>
<dbReference type="GO" id="GO:0005524">
    <property type="term" value="F:ATP binding"/>
    <property type="evidence" value="ECO:0007669"/>
    <property type="project" value="UniProtKB-UniRule"/>
</dbReference>
<dbReference type="GO" id="GO:0004088">
    <property type="term" value="F:carbamoyl-phosphate synthase (glutamine-hydrolyzing) activity"/>
    <property type="evidence" value="ECO:0007669"/>
    <property type="project" value="UniProtKB-UniRule"/>
</dbReference>
<dbReference type="GO" id="GO:0004359">
    <property type="term" value="F:glutaminase activity"/>
    <property type="evidence" value="ECO:0007669"/>
    <property type="project" value="RHEA"/>
</dbReference>
<dbReference type="GO" id="GO:0006207">
    <property type="term" value="P:'de novo' pyrimidine nucleobase biosynthetic process"/>
    <property type="evidence" value="ECO:0007669"/>
    <property type="project" value="InterPro"/>
</dbReference>
<dbReference type="GO" id="GO:0044205">
    <property type="term" value="P:'de novo' UMP biosynthetic process"/>
    <property type="evidence" value="ECO:0007669"/>
    <property type="project" value="UniProtKB-UniRule"/>
</dbReference>
<dbReference type="GO" id="GO:0006541">
    <property type="term" value="P:glutamine metabolic process"/>
    <property type="evidence" value="ECO:0007669"/>
    <property type="project" value="InterPro"/>
</dbReference>
<dbReference type="GO" id="GO:0006526">
    <property type="term" value="P:L-arginine biosynthetic process"/>
    <property type="evidence" value="ECO:0007669"/>
    <property type="project" value="UniProtKB-UniRule"/>
</dbReference>
<dbReference type="CDD" id="cd01744">
    <property type="entry name" value="GATase1_CPSase"/>
    <property type="match status" value="1"/>
</dbReference>
<dbReference type="Gene3D" id="3.40.50.880">
    <property type="match status" value="1"/>
</dbReference>
<dbReference type="Gene3D" id="3.50.30.20">
    <property type="entry name" value="Carbamoyl-phosphate synthase small subunit, N-terminal domain"/>
    <property type="match status" value="1"/>
</dbReference>
<dbReference type="HAMAP" id="MF_01209">
    <property type="entry name" value="CPSase_S_chain"/>
    <property type="match status" value="1"/>
</dbReference>
<dbReference type="InterPro" id="IPR050472">
    <property type="entry name" value="Anth_synth/Amidotransfase"/>
</dbReference>
<dbReference type="InterPro" id="IPR006274">
    <property type="entry name" value="CarbamoylP_synth_ssu"/>
</dbReference>
<dbReference type="InterPro" id="IPR002474">
    <property type="entry name" value="CarbamoylP_synth_ssu_N"/>
</dbReference>
<dbReference type="InterPro" id="IPR036480">
    <property type="entry name" value="CarbP_synth_ssu_N_sf"/>
</dbReference>
<dbReference type="InterPro" id="IPR029062">
    <property type="entry name" value="Class_I_gatase-like"/>
</dbReference>
<dbReference type="InterPro" id="IPR035686">
    <property type="entry name" value="CPSase_GATase1"/>
</dbReference>
<dbReference type="InterPro" id="IPR017926">
    <property type="entry name" value="GATASE"/>
</dbReference>
<dbReference type="NCBIfam" id="TIGR01368">
    <property type="entry name" value="CPSaseIIsmall"/>
    <property type="match status" value="1"/>
</dbReference>
<dbReference type="NCBIfam" id="NF009475">
    <property type="entry name" value="PRK12838.1"/>
    <property type="match status" value="1"/>
</dbReference>
<dbReference type="PANTHER" id="PTHR43418:SF7">
    <property type="entry name" value="CARBAMOYL-PHOSPHATE SYNTHASE SMALL CHAIN"/>
    <property type="match status" value="1"/>
</dbReference>
<dbReference type="PANTHER" id="PTHR43418">
    <property type="entry name" value="MULTIFUNCTIONAL TRYPTOPHAN BIOSYNTHESIS PROTEIN-RELATED"/>
    <property type="match status" value="1"/>
</dbReference>
<dbReference type="Pfam" id="PF00988">
    <property type="entry name" value="CPSase_sm_chain"/>
    <property type="match status" value="1"/>
</dbReference>
<dbReference type="Pfam" id="PF00117">
    <property type="entry name" value="GATase"/>
    <property type="match status" value="1"/>
</dbReference>
<dbReference type="PRINTS" id="PR00097">
    <property type="entry name" value="ANTSNTHASEII"/>
</dbReference>
<dbReference type="PRINTS" id="PR00099">
    <property type="entry name" value="CPSGATASE"/>
</dbReference>
<dbReference type="PRINTS" id="PR00096">
    <property type="entry name" value="GATASE"/>
</dbReference>
<dbReference type="SMART" id="SM01097">
    <property type="entry name" value="CPSase_sm_chain"/>
    <property type="match status" value="1"/>
</dbReference>
<dbReference type="SUPFAM" id="SSF52021">
    <property type="entry name" value="Carbamoyl phosphate synthetase, small subunit N-terminal domain"/>
    <property type="match status" value="1"/>
</dbReference>
<dbReference type="SUPFAM" id="SSF52317">
    <property type="entry name" value="Class I glutamine amidotransferase-like"/>
    <property type="match status" value="1"/>
</dbReference>
<dbReference type="PROSITE" id="PS51273">
    <property type="entry name" value="GATASE_TYPE_1"/>
    <property type="match status" value="1"/>
</dbReference>
<gene>
    <name evidence="1" type="primary">carA</name>
    <name type="ordered locus">jhp_1158</name>
</gene>
<protein>
    <recommendedName>
        <fullName evidence="1">Carbamoyl phosphate synthase small chain</fullName>
        <ecNumber evidence="1">6.3.5.5</ecNumber>
    </recommendedName>
    <alternativeName>
        <fullName evidence="1">Carbamoyl phosphate synthetase glutamine chain</fullName>
    </alternativeName>
</protein>
<accession>Q9ZJY9</accession>
<evidence type="ECO:0000255" key="1">
    <source>
        <dbReference type="HAMAP-Rule" id="MF_01209"/>
    </source>
</evidence>
<proteinExistence type="inferred from homology"/>
<feature type="chain" id="PRO_0000112283" description="Carbamoyl phosphate synthase small chain">
    <location>
        <begin position="1"/>
        <end position="375"/>
    </location>
</feature>
<feature type="domain" description="Glutamine amidotransferase type-1" evidence="1">
    <location>
        <begin position="188"/>
        <end position="375"/>
    </location>
</feature>
<feature type="region of interest" description="CPSase" evidence="1">
    <location>
        <begin position="1"/>
        <end position="184"/>
    </location>
</feature>
<feature type="active site" description="Nucleophile" evidence="1">
    <location>
        <position position="268"/>
    </location>
</feature>
<feature type="active site" evidence="1">
    <location>
        <position position="351"/>
    </location>
</feature>
<feature type="active site" evidence="1">
    <location>
        <position position="353"/>
    </location>
</feature>
<feature type="binding site" evidence="1">
    <location>
        <position position="44"/>
    </location>
    <ligand>
        <name>L-glutamine</name>
        <dbReference type="ChEBI" id="CHEBI:58359"/>
    </ligand>
</feature>
<feature type="binding site" evidence="1">
    <location>
        <position position="240"/>
    </location>
    <ligand>
        <name>L-glutamine</name>
        <dbReference type="ChEBI" id="CHEBI:58359"/>
    </ligand>
</feature>
<feature type="binding site" evidence="1">
    <location>
        <position position="242"/>
    </location>
    <ligand>
        <name>L-glutamine</name>
        <dbReference type="ChEBI" id="CHEBI:58359"/>
    </ligand>
</feature>
<feature type="binding site" evidence="1">
    <location>
        <position position="269"/>
    </location>
    <ligand>
        <name>L-glutamine</name>
        <dbReference type="ChEBI" id="CHEBI:58359"/>
    </ligand>
</feature>
<feature type="binding site" evidence="1">
    <location>
        <position position="272"/>
    </location>
    <ligand>
        <name>L-glutamine</name>
        <dbReference type="ChEBI" id="CHEBI:58359"/>
    </ligand>
</feature>
<feature type="binding site" evidence="1">
    <location>
        <position position="310"/>
    </location>
    <ligand>
        <name>L-glutamine</name>
        <dbReference type="ChEBI" id="CHEBI:58359"/>
    </ligand>
</feature>
<feature type="binding site" evidence="1">
    <location>
        <position position="313"/>
    </location>
    <ligand>
        <name>L-glutamine</name>
        <dbReference type="ChEBI" id="CHEBI:58359"/>
    </ligand>
</feature>
<sequence>MVSLYLENGLFLQAQSFGASGTQVGELVFNTSMSGYQEVISDPSYKGQFVVFSMPEIGVVGANPKDDESFFSCAGVLARHYNEFFSNSRADSSLSTYLKKRGVLGISGVDTRSLIKTLRHHGCLMMIASTIEHDRNKLEEVLKNAPKISHSPLVSSVSTPKIITHQRATFDFNTLDYKPFDEKIPHKIIAVLDFGAKGNILNELQNVGLKALIYPHHTKANELIKAYEKKEISGIFLSNGPGDPLSLQQEIGEIKRLINAKIPMFGICLGHQLLSIAQGYPTYKLKFGHHGSNHPVKNLETNAVEITAQNHNYCVPEEIEEIATITHRNLFDNTIEGVRYKNAPIISVQHHPESSPGPKESHYIFKEFVGLLEGF</sequence>
<organism>
    <name type="scientific">Helicobacter pylori (strain J99 / ATCC 700824)</name>
    <name type="common">Campylobacter pylori J99</name>
    <dbReference type="NCBI Taxonomy" id="85963"/>
    <lineage>
        <taxon>Bacteria</taxon>
        <taxon>Pseudomonadati</taxon>
        <taxon>Campylobacterota</taxon>
        <taxon>Epsilonproteobacteria</taxon>
        <taxon>Campylobacterales</taxon>
        <taxon>Helicobacteraceae</taxon>
        <taxon>Helicobacter</taxon>
    </lineage>
</organism>
<keyword id="KW-0028">Amino-acid biosynthesis</keyword>
<keyword id="KW-0055">Arginine biosynthesis</keyword>
<keyword id="KW-0067">ATP-binding</keyword>
<keyword id="KW-0315">Glutamine amidotransferase</keyword>
<keyword id="KW-0436">Ligase</keyword>
<keyword id="KW-0547">Nucleotide-binding</keyword>
<keyword id="KW-0665">Pyrimidine biosynthesis</keyword>
<reference key="1">
    <citation type="journal article" date="1999" name="Nature">
        <title>Genomic sequence comparison of two unrelated isolates of the human gastric pathogen Helicobacter pylori.</title>
        <authorList>
            <person name="Alm R.A."/>
            <person name="Ling L.-S.L."/>
            <person name="Moir D.T."/>
            <person name="King B.L."/>
            <person name="Brown E.D."/>
            <person name="Doig P.C."/>
            <person name="Smith D.R."/>
            <person name="Noonan B."/>
            <person name="Guild B.C."/>
            <person name="deJonge B.L."/>
            <person name="Carmel G."/>
            <person name="Tummino P.J."/>
            <person name="Caruso A."/>
            <person name="Uria-Nickelsen M."/>
            <person name="Mills D.M."/>
            <person name="Ives C."/>
            <person name="Gibson R."/>
            <person name="Merberg D."/>
            <person name="Mills S.D."/>
            <person name="Jiang Q."/>
            <person name="Taylor D.E."/>
            <person name="Vovis G.F."/>
            <person name="Trust T.J."/>
        </authorList>
    </citation>
    <scope>NUCLEOTIDE SEQUENCE [LARGE SCALE GENOMIC DNA]</scope>
    <source>
        <strain>J99 / ATCC 700824</strain>
    </source>
</reference>
<comment type="function">
    <text evidence="1">Small subunit of the glutamine-dependent carbamoyl phosphate synthetase (CPSase). CPSase catalyzes the formation of carbamoyl phosphate from the ammonia moiety of glutamine, carbonate, and phosphate donated by ATP, constituting the first step of 2 biosynthetic pathways, one leading to arginine and/or urea and the other to pyrimidine nucleotides. The small subunit (glutamine amidotransferase) binds and cleaves glutamine to supply the large subunit with the substrate ammonia.</text>
</comment>
<comment type="catalytic activity">
    <reaction evidence="1">
        <text>hydrogencarbonate + L-glutamine + 2 ATP + H2O = carbamoyl phosphate + L-glutamate + 2 ADP + phosphate + 2 H(+)</text>
        <dbReference type="Rhea" id="RHEA:18633"/>
        <dbReference type="ChEBI" id="CHEBI:15377"/>
        <dbReference type="ChEBI" id="CHEBI:15378"/>
        <dbReference type="ChEBI" id="CHEBI:17544"/>
        <dbReference type="ChEBI" id="CHEBI:29985"/>
        <dbReference type="ChEBI" id="CHEBI:30616"/>
        <dbReference type="ChEBI" id="CHEBI:43474"/>
        <dbReference type="ChEBI" id="CHEBI:58228"/>
        <dbReference type="ChEBI" id="CHEBI:58359"/>
        <dbReference type="ChEBI" id="CHEBI:456216"/>
        <dbReference type="EC" id="6.3.5.5"/>
    </reaction>
</comment>
<comment type="catalytic activity">
    <molecule>Carbamoyl phosphate synthase small chain</molecule>
    <reaction evidence="1">
        <text>L-glutamine + H2O = L-glutamate + NH4(+)</text>
        <dbReference type="Rhea" id="RHEA:15889"/>
        <dbReference type="ChEBI" id="CHEBI:15377"/>
        <dbReference type="ChEBI" id="CHEBI:28938"/>
        <dbReference type="ChEBI" id="CHEBI:29985"/>
        <dbReference type="ChEBI" id="CHEBI:58359"/>
    </reaction>
</comment>
<comment type="pathway">
    <text evidence="1">Amino-acid biosynthesis; L-arginine biosynthesis; carbamoyl phosphate from bicarbonate: step 1/1.</text>
</comment>
<comment type="pathway">
    <text evidence="1">Pyrimidine metabolism; UMP biosynthesis via de novo pathway; (S)-dihydroorotate from bicarbonate: step 1/3.</text>
</comment>
<comment type="subunit">
    <text evidence="1">Composed of two chains; the small (or glutamine) chain promotes the hydrolysis of glutamine to ammonia, which is used by the large (or ammonia) chain to synthesize carbamoyl phosphate. Tetramer of heterodimers (alpha,beta)4.</text>
</comment>
<comment type="similarity">
    <text evidence="1">Belongs to the CarA family.</text>
</comment>
<name>CARA_HELPJ</name>